<feature type="chain" id="PRO_0000261948" description="Nucleotide-binding protein MS1759">
    <location>
        <begin position="1"/>
        <end position="163"/>
    </location>
</feature>
<reference key="1">
    <citation type="journal article" date="2004" name="Nat. Biotechnol.">
        <title>The genome sequence of the capnophilic rumen bacterium Mannheimia succiniciproducens.</title>
        <authorList>
            <person name="Hong S.H."/>
            <person name="Kim J.S."/>
            <person name="Lee S.Y."/>
            <person name="In Y.H."/>
            <person name="Choi S.S."/>
            <person name="Rih J.-K."/>
            <person name="Kim C.H."/>
            <person name="Jeong H."/>
            <person name="Hur C.G."/>
            <person name="Kim J.J."/>
        </authorList>
    </citation>
    <scope>NUCLEOTIDE SEQUENCE [LARGE SCALE GENOMIC DNA]</scope>
    <source>
        <strain>KCTC 0769BP / MBEL55E</strain>
    </source>
</reference>
<organism>
    <name type="scientific">Mannheimia succiniciproducens (strain KCTC 0769BP / MBEL55E)</name>
    <dbReference type="NCBI Taxonomy" id="221988"/>
    <lineage>
        <taxon>Bacteria</taxon>
        <taxon>Pseudomonadati</taxon>
        <taxon>Pseudomonadota</taxon>
        <taxon>Gammaproteobacteria</taxon>
        <taxon>Pasteurellales</taxon>
        <taxon>Pasteurellaceae</taxon>
        <taxon>Basfia</taxon>
    </lineage>
</organism>
<dbReference type="EMBL" id="AE016827">
    <property type="protein sequence ID" value="AAU38366.1"/>
    <property type="molecule type" value="Genomic_DNA"/>
</dbReference>
<dbReference type="RefSeq" id="WP_011200925.1">
    <property type="nucleotide sequence ID" value="NC_006300.1"/>
</dbReference>
<dbReference type="SMR" id="Q65RP4"/>
<dbReference type="STRING" id="221988.MS1759"/>
<dbReference type="KEGG" id="msu:MS1759"/>
<dbReference type="eggNOG" id="COG1666">
    <property type="taxonomic scope" value="Bacteria"/>
</dbReference>
<dbReference type="HOGENOM" id="CLU_099839_1_0_6"/>
<dbReference type="OrthoDB" id="9801447at2"/>
<dbReference type="Proteomes" id="UP000000607">
    <property type="component" value="Chromosome"/>
</dbReference>
<dbReference type="GO" id="GO:0005829">
    <property type="term" value="C:cytosol"/>
    <property type="evidence" value="ECO:0007669"/>
    <property type="project" value="TreeGrafter"/>
</dbReference>
<dbReference type="GO" id="GO:0000166">
    <property type="term" value="F:nucleotide binding"/>
    <property type="evidence" value="ECO:0007669"/>
    <property type="project" value="TreeGrafter"/>
</dbReference>
<dbReference type="CDD" id="cd11740">
    <property type="entry name" value="YajQ_like"/>
    <property type="match status" value="1"/>
</dbReference>
<dbReference type="FunFam" id="3.30.70.860:FF:000001">
    <property type="entry name" value="UPF0234 protein YajQ"/>
    <property type="match status" value="1"/>
</dbReference>
<dbReference type="FunFam" id="3.30.70.990:FF:000001">
    <property type="entry name" value="UPF0234 protein YajQ"/>
    <property type="match status" value="1"/>
</dbReference>
<dbReference type="Gene3D" id="3.30.70.860">
    <property type="match status" value="1"/>
</dbReference>
<dbReference type="Gene3D" id="3.30.70.990">
    <property type="entry name" value="YajQ-like, domain 2"/>
    <property type="match status" value="1"/>
</dbReference>
<dbReference type="HAMAP" id="MF_00632">
    <property type="entry name" value="YajQ"/>
    <property type="match status" value="1"/>
</dbReference>
<dbReference type="InterPro" id="IPR007551">
    <property type="entry name" value="DUF520"/>
</dbReference>
<dbReference type="InterPro" id="IPR035571">
    <property type="entry name" value="UPF0234-like_C"/>
</dbReference>
<dbReference type="InterPro" id="IPR035570">
    <property type="entry name" value="UPF0234_N"/>
</dbReference>
<dbReference type="InterPro" id="IPR036183">
    <property type="entry name" value="YajQ-like_sf"/>
</dbReference>
<dbReference type="NCBIfam" id="NF003819">
    <property type="entry name" value="PRK05412.1"/>
    <property type="match status" value="1"/>
</dbReference>
<dbReference type="PANTHER" id="PTHR30476">
    <property type="entry name" value="UPF0234 PROTEIN YAJQ"/>
    <property type="match status" value="1"/>
</dbReference>
<dbReference type="PANTHER" id="PTHR30476:SF0">
    <property type="entry name" value="UPF0234 PROTEIN YAJQ"/>
    <property type="match status" value="1"/>
</dbReference>
<dbReference type="Pfam" id="PF04461">
    <property type="entry name" value="DUF520"/>
    <property type="match status" value="1"/>
</dbReference>
<dbReference type="SUPFAM" id="SSF89963">
    <property type="entry name" value="YajQ-like"/>
    <property type="match status" value="2"/>
</dbReference>
<accession>Q65RP4</accession>
<gene>
    <name type="ordered locus">MS1759</name>
</gene>
<comment type="function">
    <text evidence="1">Nucleotide-binding protein.</text>
</comment>
<comment type="similarity">
    <text evidence="1">Belongs to the YajQ family.</text>
</comment>
<evidence type="ECO:0000255" key="1">
    <source>
        <dbReference type="HAMAP-Rule" id="MF_00632"/>
    </source>
</evidence>
<sequence length="163" mass="18474">MPSFDIVSEITMHEVNNAVENANRILSTRYDFRGVEAVIELNEKNETIKLTTESDFQLEQLIEILIGACIKRNIDSTSLDIPTESEHHGKLYSKEVKLKQGIETETAKKITKLIKDSKLKVQTQIQGEQVRVTGKSRDDLQAAIQLVKGAELGQPFQFNNFRD</sequence>
<keyword id="KW-0547">Nucleotide-binding</keyword>
<name>Y1759_MANSM</name>
<proteinExistence type="inferred from homology"/>
<protein>
    <recommendedName>
        <fullName evidence="1">Nucleotide-binding protein MS1759</fullName>
    </recommendedName>
</protein>